<protein>
    <recommendedName>
        <fullName evidence="1">Large ribosomal subunit protein uL23</fullName>
    </recommendedName>
    <alternativeName>
        <fullName evidence="2">50S ribosomal protein L23</fullName>
    </alternativeName>
</protein>
<organism>
    <name type="scientific">Treponema pallidum (strain Nichols)</name>
    <dbReference type="NCBI Taxonomy" id="243276"/>
    <lineage>
        <taxon>Bacteria</taxon>
        <taxon>Pseudomonadati</taxon>
        <taxon>Spirochaetota</taxon>
        <taxon>Spirochaetia</taxon>
        <taxon>Spirochaetales</taxon>
        <taxon>Treponemataceae</taxon>
        <taxon>Treponema</taxon>
    </lineage>
</organism>
<evidence type="ECO:0000255" key="1">
    <source>
        <dbReference type="HAMAP-Rule" id="MF_01369"/>
    </source>
</evidence>
<evidence type="ECO:0000305" key="2"/>
<comment type="function">
    <text evidence="1">One of the early assembly proteins it binds 23S rRNA. One of the proteins that surrounds the polypeptide exit tunnel on the outside of the ribosome. Forms the main docking site for trigger factor binding to the ribosome.</text>
</comment>
<comment type="subunit">
    <text evidence="1">Part of the 50S ribosomal subunit. Contacts protein L29, and trigger factor when it is bound to the ribosome.</text>
</comment>
<comment type="similarity">
    <text evidence="1">Belongs to the universal ribosomal protein uL23 family.</text>
</comment>
<reference key="1">
    <citation type="journal article" date="1998" name="Science">
        <title>Complete genome sequence of Treponema pallidum, the syphilis spirochete.</title>
        <authorList>
            <person name="Fraser C.M."/>
            <person name="Norris S.J."/>
            <person name="Weinstock G.M."/>
            <person name="White O."/>
            <person name="Sutton G.G."/>
            <person name="Dodson R.J."/>
            <person name="Gwinn M.L."/>
            <person name="Hickey E.K."/>
            <person name="Clayton R.A."/>
            <person name="Ketchum K.A."/>
            <person name="Sodergren E."/>
            <person name="Hardham J.M."/>
            <person name="McLeod M.P."/>
            <person name="Salzberg S.L."/>
            <person name="Peterson J.D."/>
            <person name="Khalak H.G."/>
            <person name="Richardson D.L."/>
            <person name="Howell J.K."/>
            <person name="Chidambaram M."/>
            <person name="Utterback T.R."/>
            <person name="McDonald L.A."/>
            <person name="Artiach P."/>
            <person name="Bowman C."/>
            <person name="Cotton M.D."/>
            <person name="Fujii C."/>
            <person name="Garland S.A."/>
            <person name="Hatch B."/>
            <person name="Horst K."/>
            <person name="Roberts K.M."/>
            <person name="Sandusky M."/>
            <person name="Weidman J.F."/>
            <person name="Smith H.O."/>
            <person name="Venter J.C."/>
        </authorList>
    </citation>
    <scope>NUCLEOTIDE SEQUENCE [LARGE SCALE GENOMIC DNA]</scope>
    <source>
        <strain>Nichols</strain>
    </source>
</reference>
<feature type="chain" id="PRO_0000129429" description="Large ribosomal subunit protein uL23">
    <location>
        <begin position="1"/>
        <end position="94"/>
    </location>
</feature>
<sequence length="94" mass="10512">MEHTDVVIAPVLTEKSNALRQQGKYVFRVAARATKIQIKQAVTQLFGVTVRRCTVMNVFGKKRRVRHRTGRTSGWKKAIVHVAAGQSIGVLERA</sequence>
<keyword id="KW-1185">Reference proteome</keyword>
<keyword id="KW-0687">Ribonucleoprotein</keyword>
<keyword id="KW-0689">Ribosomal protein</keyword>
<keyword id="KW-0694">RNA-binding</keyword>
<keyword id="KW-0699">rRNA-binding</keyword>
<proteinExistence type="inferred from homology"/>
<name>RL23_TREPA</name>
<gene>
    <name evidence="1" type="primary">rplW</name>
    <name type="ordered locus">TP_0191</name>
</gene>
<accession>O83221</accession>
<dbReference type="EMBL" id="AE000520">
    <property type="protein sequence ID" value="AAC65176.1"/>
    <property type="molecule type" value="Genomic_DNA"/>
</dbReference>
<dbReference type="PIR" id="A71355">
    <property type="entry name" value="A71355"/>
</dbReference>
<dbReference type="RefSeq" id="WP_010881638.1">
    <property type="nucleotide sequence ID" value="NC_021490.2"/>
</dbReference>
<dbReference type="SMR" id="O83221"/>
<dbReference type="STRING" id="243276.TP_0191"/>
<dbReference type="EnsemblBacteria" id="AAC65176">
    <property type="protein sequence ID" value="AAC65176"/>
    <property type="gene ID" value="TP_0191"/>
</dbReference>
<dbReference type="KEGG" id="tpa:TP_0191"/>
<dbReference type="KEGG" id="tpw:TPANIC_0191"/>
<dbReference type="eggNOG" id="COG0089">
    <property type="taxonomic scope" value="Bacteria"/>
</dbReference>
<dbReference type="HOGENOM" id="CLU_037562_3_2_12"/>
<dbReference type="OrthoDB" id="9793353at2"/>
<dbReference type="Proteomes" id="UP000000811">
    <property type="component" value="Chromosome"/>
</dbReference>
<dbReference type="GO" id="GO:1990904">
    <property type="term" value="C:ribonucleoprotein complex"/>
    <property type="evidence" value="ECO:0007669"/>
    <property type="project" value="UniProtKB-KW"/>
</dbReference>
<dbReference type="GO" id="GO:0005840">
    <property type="term" value="C:ribosome"/>
    <property type="evidence" value="ECO:0007669"/>
    <property type="project" value="UniProtKB-KW"/>
</dbReference>
<dbReference type="GO" id="GO:0019843">
    <property type="term" value="F:rRNA binding"/>
    <property type="evidence" value="ECO:0007669"/>
    <property type="project" value="UniProtKB-UniRule"/>
</dbReference>
<dbReference type="GO" id="GO:0003735">
    <property type="term" value="F:structural constituent of ribosome"/>
    <property type="evidence" value="ECO:0007669"/>
    <property type="project" value="InterPro"/>
</dbReference>
<dbReference type="GO" id="GO:0006412">
    <property type="term" value="P:translation"/>
    <property type="evidence" value="ECO:0007669"/>
    <property type="project" value="UniProtKB-UniRule"/>
</dbReference>
<dbReference type="FunFam" id="3.30.70.330:FF:000001">
    <property type="entry name" value="50S ribosomal protein L23"/>
    <property type="match status" value="1"/>
</dbReference>
<dbReference type="Gene3D" id="3.30.70.330">
    <property type="match status" value="1"/>
</dbReference>
<dbReference type="HAMAP" id="MF_01369_B">
    <property type="entry name" value="Ribosomal_uL23_B"/>
    <property type="match status" value="1"/>
</dbReference>
<dbReference type="InterPro" id="IPR012677">
    <property type="entry name" value="Nucleotide-bd_a/b_plait_sf"/>
</dbReference>
<dbReference type="InterPro" id="IPR013025">
    <property type="entry name" value="Ribosomal_uL23-like"/>
</dbReference>
<dbReference type="InterPro" id="IPR012678">
    <property type="entry name" value="Ribosomal_uL23/eL15/eS24_sf"/>
</dbReference>
<dbReference type="NCBIfam" id="NF004363">
    <property type="entry name" value="PRK05738.2-4"/>
    <property type="match status" value="1"/>
</dbReference>
<dbReference type="NCBIfam" id="NF004366">
    <property type="entry name" value="PRK05738.3-2"/>
    <property type="match status" value="1"/>
</dbReference>
<dbReference type="Pfam" id="PF00276">
    <property type="entry name" value="Ribosomal_L23"/>
    <property type="match status" value="1"/>
</dbReference>
<dbReference type="SUPFAM" id="SSF54189">
    <property type="entry name" value="Ribosomal proteins S24e, L23 and L15e"/>
    <property type="match status" value="1"/>
</dbReference>